<protein>
    <recommendedName>
        <fullName evidence="1">Chromosome partition protein MukF</fullName>
    </recommendedName>
</protein>
<dbReference type="EMBL" id="FM180568">
    <property type="protein sequence ID" value="CAS08463.1"/>
    <property type="molecule type" value="Genomic_DNA"/>
</dbReference>
<dbReference type="RefSeq" id="WP_001288839.1">
    <property type="nucleotide sequence ID" value="NC_011601.1"/>
</dbReference>
<dbReference type="SMR" id="B7UN08"/>
<dbReference type="KEGG" id="ecg:E2348C_0915"/>
<dbReference type="HOGENOM" id="CLU_049853_0_0_6"/>
<dbReference type="Proteomes" id="UP000008205">
    <property type="component" value="Chromosome"/>
</dbReference>
<dbReference type="GO" id="GO:0005737">
    <property type="term" value="C:cytoplasm"/>
    <property type="evidence" value="ECO:0007669"/>
    <property type="project" value="UniProtKB-UniRule"/>
</dbReference>
<dbReference type="GO" id="GO:0009295">
    <property type="term" value="C:nucleoid"/>
    <property type="evidence" value="ECO:0007669"/>
    <property type="project" value="UniProtKB-SubCell"/>
</dbReference>
<dbReference type="GO" id="GO:0005509">
    <property type="term" value="F:calcium ion binding"/>
    <property type="evidence" value="ECO:0007669"/>
    <property type="project" value="UniProtKB-UniRule"/>
</dbReference>
<dbReference type="GO" id="GO:0051301">
    <property type="term" value="P:cell division"/>
    <property type="evidence" value="ECO:0007669"/>
    <property type="project" value="UniProtKB-KW"/>
</dbReference>
<dbReference type="GO" id="GO:0030261">
    <property type="term" value="P:chromosome condensation"/>
    <property type="evidence" value="ECO:0007669"/>
    <property type="project" value="UniProtKB-KW"/>
</dbReference>
<dbReference type="GO" id="GO:0007059">
    <property type="term" value="P:chromosome segregation"/>
    <property type="evidence" value="ECO:0007669"/>
    <property type="project" value="UniProtKB-UniRule"/>
</dbReference>
<dbReference type="GO" id="GO:0006260">
    <property type="term" value="P:DNA replication"/>
    <property type="evidence" value="ECO:0007669"/>
    <property type="project" value="UniProtKB-UniRule"/>
</dbReference>
<dbReference type="CDD" id="cd16337">
    <property type="entry name" value="MukF_C"/>
    <property type="match status" value="1"/>
</dbReference>
<dbReference type="CDD" id="cd16335">
    <property type="entry name" value="MukF_N"/>
    <property type="match status" value="1"/>
</dbReference>
<dbReference type="Gene3D" id="1.20.58.590">
    <property type="entry name" value="Chromosome partition protein MukF, middle domain"/>
    <property type="match status" value="1"/>
</dbReference>
<dbReference type="Gene3D" id="1.10.225.40">
    <property type="entry name" value="MukF, C-terminal domain"/>
    <property type="match status" value="1"/>
</dbReference>
<dbReference type="Gene3D" id="1.10.10.10">
    <property type="entry name" value="Winged helix-like DNA-binding domain superfamily/Winged helix DNA-binding domain"/>
    <property type="match status" value="1"/>
</dbReference>
<dbReference type="HAMAP" id="MF_01803">
    <property type="entry name" value="MukF"/>
    <property type="match status" value="1"/>
</dbReference>
<dbReference type="InterPro" id="IPR005582">
    <property type="entry name" value="Chromosome_partition_MukF"/>
</dbReference>
<dbReference type="InterPro" id="IPR033441">
    <property type="entry name" value="MukF_C"/>
</dbReference>
<dbReference type="InterPro" id="IPR038198">
    <property type="entry name" value="MukF_C_sf"/>
</dbReference>
<dbReference type="InterPro" id="IPR033440">
    <property type="entry name" value="MukF_M"/>
</dbReference>
<dbReference type="InterPro" id="IPR036141">
    <property type="entry name" value="MukF_M_sp"/>
</dbReference>
<dbReference type="InterPro" id="IPR033439">
    <property type="entry name" value="MukF_WHTH"/>
</dbReference>
<dbReference type="InterPro" id="IPR036388">
    <property type="entry name" value="WH-like_DNA-bd_sf"/>
</dbReference>
<dbReference type="InterPro" id="IPR036390">
    <property type="entry name" value="WH_DNA-bd_sf"/>
</dbReference>
<dbReference type="NCBIfam" id="NF003615">
    <property type="entry name" value="PRK05260.1"/>
    <property type="match status" value="1"/>
</dbReference>
<dbReference type="Pfam" id="PF03882">
    <property type="entry name" value="KicB"/>
    <property type="match status" value="1"/>
</dbReference>
<dbReference type="Pfam" id="PF17193">
    <property type="entry name" value="MukF_C"/>
    <property type="match status" value="1"/>
</dbReference>
<dbReference type="Pfam" id="PF17192">
    <property type="entry name" value="MukF_M"/>
    <property type="match status" value="1"/>
</dbReference>
<dbReference type="PIRSF" id="PIRSF018282">
    <property type="entry name" value="MukF"/>
    <property type="match status" value="1"/>
</dbReference>
<dbReference type="SUPFAM" id="SSF140570">
    <property type="entry name" value="MukF C-terminal domain-like"/>
    <property type="match status" value="1"/>
</dbReference>
<dbReference type="SUPFAM" id="SSF46785">
    <property type="entry name" value="Winged helix' DNA-binding domain"/>
    <property type="match status" value="1"/>
</dbReference>
<proteinExistence type="inferred from homology"/>
<keyword id="KW-0106">Calcium</keyword>
<keyword id="KW-0131">Cell cycle</keyword>
<keyword id="KW-0132">Cell division</keyword>
<keyword id="KW-0159">Chromosome partition</keyword>
<keyword id="KW-0963">Cytoplasm</keyword>
<keyword id="KW-0226">DNA condensation</keyword>
<keyword id="KW-1185">Reference proteome</keyword>
<comment type="function">
    <text evidence="1">Involved in chromosome condensation, segregation and cell cycle progression. May participate in facilitating chromosome segregation by condensation DNA from both sides of a centrally located replisome during cell division. Not required for mini-F plasmid partitioning. Probably acts via its interaction with MukB and MukE. Overexpression results in anucleate cells. It has a calcium binding activity.</text>
</comment>
<comment type="subunit">
    <text evidence="1">Interacts, and probably forms a ternary complex, with MukE and MukB via its C-terminal region. The complex formation is stimulated by calcium or magnesium. It is required for an interaction between MukE and MukB.</text>
</comment>
<comment type="subcellular location">
    <subcellularLocation>
        <location evidence="1">Cytoplasm</location>
        <location evidence="1">Nucleoid</location>
    </subcellularLocation>
    <text evidence="1">Restricted to the nucleoid region.</text>
</comment>
<comment type="similarity">
    <text evidence="1">Belongs to the MukF family.</text>
</comment>
<name>MUKF_ECO27</name>
<reference key="1">
    <citation type="journal article" date="2009" name="J. Bacteriol.">
        <title>Complete genome sequence and comparative genome analysis of enteropathogenic Escherichia coli O127:H6 strain E2348/69.</title>
        <authorList>
            <person name="Iguchi A."/>
            <person name="Thomson N.R."/>
            <person name="Ogura Y."/>
            <person name="Saunders D."/>
            <person name="Ooka T."/>
            <person name="Henderson I.R."/>
            <person name="Harris D."/>
            <person name="Asadulghani M."/>
            <person name="Kurokawa K."/>
            <person name="Dean P."/>
            <person name="Kenny B."/>
            <person name="Quail M.A."/>
            <person name="Thurston S."/>
            <person name="Dougan G."/>
            <person name="Hayashi T."/>
            <person name="Parkhill J."/>
            <person name="Frankel G."/>
        </authorList>
    </citation>
    <scope>NUCLEOTIDE SEQUENCE [LARGE SCALE GENOMIC DNA]</scope>
    <source>
        <strain>E2348/69 / EPEC</strain>
    </source>
</reference>
<organism>
    <name type="scientific">Escherichia coli O127:H6 (strain E2348/69 / EPEC)</name>
    <dbReference type="NCBI Taxonomy" id="574521"/>
    <lineage>
        <taxon>Bacteria</taxon>
        <taxon>Pseudomonadati</taxon>
        <taxon>Pseudomonadota</taxon>
        <taxon>Gammaproteobacteria</taxon>
        <taxon>Enterobacterales</taxon>
        <taxon>Enterobacteriaceae</taxon>
        <taxon>Escherichia</taxon>
    </lineage>
</organism>
<gene>
    <name evidence="1" type="primary">mukF</name>
    <name type="ordered locus">E2348C_0915</name>
</gene>
<feature type="chain" id="PRO_1000187498" description="Chromosome partition protein MukF">
    <location>
        <begin position="1"/>
        <end position="440"/>
    </location>
</feature>
<feature type="region of interest" description="Leucine-zipper">
    <location>
        <begin position="208"/>
        <end position="236"/>
    </location>
</feature>
<accession>B7UN08</accession>
<sequence length="440" mass="50619">MSEFSQTVPELVAWARKNDFSISLPVDRLSFLLAVATLNGERLDGEMSEGELVDAFRHVSDAFEQTSETIGVRANNAINDMVRQRLLNRFTSEQAEGNAIYRLTPLGIGITDYYIRQREFSTLRLSMQLSIVAGELKRAADAAEEGGDEFHWHRNVYAPLKYSVAEIFDSIDLTQRLMDEQQQQVKDDIAQLLNKDWRAAISSCELLLSETSGTLRELQDTLEAAGDKLQANLLRIQDATMIHDDLHFVDRLVFDLQSKLDRIISWGQQSIDLWIGYDRHVHKFIRTAIDMDKNRVFAQRLRQSVQTYFDEPWALTYANADRLLDMRDEEMVLRDEEVTGELPEDLEYEEFNEIREQLAAIIEEQLAVYKTRQVPLDLGLVVREYLSQYPRARHFDVARIVIDQAVRLGVAQADFTGLPAKWQPINDYGAKVQAHVIDKY</sequence>
<evidence type="ECO:0000255" key="1">
    <source>
        <dbReference type="HAMAP-Rule" id="MF_01803"/>
    </source>
</evidence>